<proteinExistence type="inferred from homology"/>
<organism>
    <name type="scientific">Allorhizobium ampelinum (strain ATCC BAA-846 / DSM 112012 / S4)</name>
    <name type="common">Agrobacterium vitis (strain S4)</name>
    <dbReference type="NCBI Taxonomy" id="311402"/>
    <lineage>
        <taxon>Bacteria</taxon>
        <taxon>Pseudomonadati</taxon>
        <taxon>Pseudomonadota</taxon>
        <taxon>Alphaproteobacteria</taxon>
        <taxon>Hyphomicrobiales</taxon>
        <taxon>Rhizobiaceae</taxon>
        <taxon>Rhizobium/Agrobacterium group</taxon>
        <taxon>Allorhizobium</taxon>
        <taxon>Allorhizobium ampelinum</taxon>
    </lineage>
</organism>
<accession>B9JVM4</accession>
<sequence length="143" mass="15162">MAKKVAGQLKLQVKAGSANPSPPIGPALGQRGVNIMEFCKAFNAATQEMEKGMPIPVVITYYQDKSFTFIMKQPPVTYWLKKEAKIQSGSKTPGKGGKAGTITKAQVRTIAEAKMKDLNAADVDGAMAMVEGSARSMGLEVVG</sequence>
<evidence type="ECO:0000255" key="1">
    <source>
        <dbReference type="HAMAP-Rule" id="MF_00736"/>
    </source>
</evidence>
<evidence type="ECO:0000305" key="2"/>
<feature type="chain" id="PRO_1000195577" description="Large ribosomal subunit protein uL11">
    <location>
        <begin position="1"/>
        <end position="143"/>
    </location>
</feature>
<comment type="function">
    <text evidence="1">Forms part of the ribosomal stalk which helps the ribosome interact with GTP-bound translation factors.</text>
</comment>
<comment type="subunit">
    <text evidence="1">Part of the ribosomal stalk of the 50S ribosomal subunit. Interacts with L10 and the large rRNA to form the base of the stalk. L10 forms an elongated spine to which L12 dimers bind in a sequential fashion forming a multimeric L10(L12)X complex.</text>
</comment>
<comment type="PTM">
    <text evidence="1">One or more lysine residues are methylated.</text>
</comment>
<comment type="similarity">
    <text evidence="1">Belongs to the universal ribosomal protein uL11 family.</text>
</comment>
<dbReference type="EMBL" id="CP000633">
    <property type="protein sequence ID" value="ACM36304.1"/>
    <property type="molecule type" value="Genomic_DNA"/>
</dbReference>
<dbReference type="RefSeq" id="WP_015915727.1">
    <property type="nucleotide sequence ID" value="NC_011989.1"/>
</dbReference>
<dbReference type="SMR" id="B9JVM4"/>
<dbReference type="STRING" id="311402.Avi_1819"/>
<dbReference type="GeneID" id="60682390"/>
<dbReference type="KEGG" id="avi:Avi_1819"/>
<dbReference type="eggNOG" id="COG0080">
    <property type="taxonomic scope" value="Bacteria"/>
</dbReference>
<dbReference type="HOGENOM" id="CLU_074237_2_0_5"/>
<dbReference type="Proteomes" id="UP000001596">
    <property type="component" value="Chromosome 1"/>
</dbReference>
<dbReference type="GO" id="GO:0022625">
    <property type="term" value="C:cytosolic large ribosomal subunit"/>
    <property type="evidence" value="ECO:0007669"/>
    <property type="project" value="TreeGrafter"/>
</dbReference>
<dbReference type="GO" id="GO:0070180">
    <property type="term" value="F:large ribosomal subunit rRNA binding"/>
    <property type="evidence" value="ECO:0007669"/>
    <property type="project" value="UniProtKB-UniRule"/>
</dbReference>
<dbReference type="GO" id="GO:0003735">
    <property type="term" value="F:structural constituent of ribosome"/>
    <property type="evidence" value="ECO:0007669"/>
    <property type="project" value="InterPro"/>
</dbReference>
<dbReference type="GO" id="GO:0006412">
    <property type="term" value="P:translation"/>
    <property type="evidence" value="ECO:0007669"/>
    <property type="project" value="UniProtKB-UniRule"/>
</dbReference>
<dbReference type="CDD" id="cd00349">
    <property type="entry name" value="Ribosomal_L11"/>
    <property type="match status" value="1"/>
</dbReference>
<dbReference type="FunFam" id="3.30.1550.10:FF:000001">
    <property type="entry name" value="50S ribosomal protein L11"/>
    <property type="match status" value="1"/>
</dbReference>
<dbReference type="Gene3D" id="1.10.10.250">
    <property type="entry name" value="Ribosomal protein L11, C-terminal domain"/>
    <property type="match status" value="1"/>
</dbReference>
<dbReference type="Gene3D" id="3.30.1550.10">
    <property type="entry name" value="Ribosomal protein L11/L12, N-terminal domain"/>
    <property type="match status" value="1"/>
</dbReference>
<dbReference type="HAMAP" id="MF_00736">
    <property type="entry name" value="Ribosomal_uL11"/>
    <property type="match status" value="1"/>
</dbReference>
<dbReference type="InterPro" id="IPR000911">
    <property type="entry name" value="Ribosomal_uL11"/>
</dbReference>
<dbReference type="InterPro" id="IPR006519">
    <property type="entry name" value="Ribosomal_uL11_bac-typ"/>
</dbReference>
<dbReference type="InterPro" id="IPR020783">
    <property type="entry name" value="Ribosomal_uL11_C"/>
</dbReference>
<dbReference type="InterPro" id="IPR036769">
    <property type="entry name" value="Ribosomal_uL11_C_sf"/>
</dbReference>
<dbReference type="InterPro" id="IPR020784">
    <property type="entry name" value="Ribosomal_uL11_N"/>
</dbReference>
<dbReference type="InterPro" id="IPR036796">
    <property type="entry name" value="Ribosomal_uL11_N_sf"/>
</dbReference>
<dbReference type="NCBIfam" id="TIGR01632">
    <property type="entry name" value="L11_bact"/>
    <property type="match status" value="1"/>
</dbReference>
<dbReference type="PANTHER" id="PTHR11661">
    <property type="entry name" value="60S RIBOSOMAL PROTEIN L12"/>
    <property type="match status" value="1"/>
</dbReference>
<dbReference type="PANTHER" id="PTHR11661:SF1">
    <property type="entry name" value="LARGE RIBOSOMAL SUBUNIT PROTEIN UL11M"/>
    <property type="match status" value="1"/>
</dbReference>
<dbReference type="Pfam" id="PF00298">
    <property type="entry name" value="Ribosomal_L11"/>
    <property type="match status" value="1"/>
</dbReference>
<dbReference type="Pfam" id="PF03946">
    <property type="entry name" value="Ribosomal_L11_N"/>
    <property type="match status" value="1"/>
</dbReference>
<dbReference type="SMART" id="SM00649">
    <property type="entry name" value="RL11"/>
    <property type="match status" value="1"/>
</dbReference>
<dbReference type="SUPFAM" id="SSF54747">
    <property type="entry name" value="Ribosomal L11/L12e N-terminal domain"/>
    <property type="match status" value="1"/>
</dbReference>
<dbReference type="SUPFAM" id="SSF46906">
    <property type="entry name" value="Ribosomal protein L11, C-terminal domain"/>
    <property type="match status" value="1"/>
</dbReference>
<reference key="1">
    <citation type="journal article" date="2009" name="J. Bacteriol.">
        <title>Genome sequences of three Agrobacterium biovars help elucidate the evolution of multichromosome genomes in bacteria.</title>
        <authorList>
            <person name="Slater S.C."/>
            <person name="Goldman B.S."/>
            <person name="Goodner B."/>
            <person name="Setubal J.C."/>
            <person name="Farrand S.K."/>
            <person name="Nester E.W."/>
            <person name="Burr T.J."/>
            <person name="Banta L."/>
            <person name="Dickerman A.W."/>
            <person name="Paulsen I."/>
            <person name="Otten L."/>
            <person name="Suen G."/>
            <person name="Welch R."/>
            <person name="Almeida N.F."/>
            <person name="Arnold F."/>
            <person name="Burton O.T."/>
            <person name="Du Z."/>
            <person name="Ewing A."/>
            <person name="Godsy E."/>
            <person name="Heisel S."/>
            <person name="Houmiel K.L."/>
            <person name="Jhaveri J."/>
            <person name="Lu J."/>
            <person name="Miller N.M."/>
            <person name="Norton S."/>
            <person name="Chen Q."/>
            <person name="Phoolcharoen W."/>
            <person name="Ohlin V."/>
            <person name="Ondrusek D."/>
            <person name="Pride N."/>
            <person name="Stricklin S.L."/>
            <person name="Sun J."/>
            <person name="Wheeler C."/>
            <person name="Wilson L."/>
            <person name="Zhu H."/>
            <person name="Wood D.W."/>
        </authorList>
    </citation>
    <scope>NUCLEOTIDE SEQUENCE [LARGE SCALE GENOMIC DNA]</scope>
    <source>
        <strain>ATCC BAA-846 / DSM 112012 / S4</strain>
    </source>
</reference>
<protein>
    <recommendedName>
        <fullName evidence="1">Large ribosomal subunit protein uL11</fullName>
    </recommendedName>
    <alternativeName>
        <fullName evidence="2">50S ribosomal protein L11</fullName>
    </alternativeName>
</protein>
<name>RL11_ALLAM</name>
<keyword id="KW-0488">Methylation</keyword>
<keyword id="KW-1185">Reference proteome</keyword>
<keyword id="KW-0687">Ribonucleoprotein</keyword>
<keyword id="KW-0689">Ribosomal protein</keyword>
<keyword id="KW-0694">RNA-binding</keyword>
<keyword id="KW-0699">rRNA-binding</keyword>
<gene>
    <name evidence="1" type="primary">rplK</name>
    <name type="ordered locus">Avi_1819</name>
</gene>